<evidence type="ECO:0000250" key="1"/>
<evidence type="ECO:0000250" key="2">
    <source>
        <dbReference type="UniProtKB" id="P01175"/>
    </source>
</evidence>
<evidence type="ECO:0000250" key="3">
    <source>
        <dbReference type="UniProtKB" id="P01178"/>
    </source>
</evidence>
<evidence type="ECO:0000305" key="4"/>
<protein>
    <recommendedName>
        <fullName>Oxytocin-neurophysin 1</fullName>
        <shortName>OT-NPI</shortName>
    </recommendedName>
    <component>
        <recommendedName>
            <fullName>Oxytocin</fullName>
        </recommendedName>
        <alternativeName>
            <fullName>Ocytocin</fullName>
        </alternativeName>
    </component>
    <component>
        <recommendedName>
            <fullName>Neurophysin 1</fullName>
        </recommendedName>
    </component>
</protein>
<reference key="1">
    <citation type="journal article" date="1990" name="Endocrinology">
        <title>Expression of the oxytocin and vasopressin genes in human and baboon gonadal tissues.</title>
        <authorList>
            <person name="Ivell R."/>
            <person name="Furuya K."/>
            <person name="Brackmann B."/>
            <person name="Dawood Y."/>
            <person name="Khan-Dawood F."/>
        </authorList>
    </citation>
    <scope>NUCLEOTIDE SEQUENCE [MRNA]</scope>
</reference>
<organism>
    <name type="scientific">Papio hamadryas</name>
    <name type="common">Hamadryas baboon</name>
    <dbReference type="NCBI Taxonomy" id="9557"/>
    <lineage>
        <taxon>Eukaryota</taxon>
        <taxon>Metazoa</taxon>
        <taxon>Chordata</taxon>
        <taxon>Craniata</taxon>
        <taxon>Vertebrata</taxon>
        <taxon>Euteleostomi</taxon>
        <taxon>Mammalia</taxon>
        <taxon>Eutheria</taxon>
        <taxon>Euarchontoglires</taxon>
        <taxon>Primates</taxon>
        <taxon>Haplorrhini</taxon>
        <taxon>Catarrhini</taxon>
        <taxon>Cercopithecidae</taxon>
        <taxon>Cercopithecinae</taxon>
        <taxon>Papio</taxon>
    </lineage>
</organism>
<gene>
    <name type="primary">OXT</name>
</gene>
<keyword id="KW-0027">Amidation</keyword>
<keyword id="KW-0165">Cleavage on pair of basic residues</keyword>
<keyword id="KW-1015">Disulfide bond</keyword>
<keyword id="KW-0372">Hormone</keyword>
<accession>P32005</accession>
<comment type="function">
    <text>Neurophysin 1 specifically binds oxytocin.</text>
</comment>
<comment type="function">
    <text evidence="3">Oxytocin causes contraction of the smooth muscle of the uterus and of the mammary gland. Acts by binding to oxytocin receptor (OXTR) (By similarity).</text>
</comment>
<comment type="subunit">
    <text evidence="3">Interacts with oxytocin receptor (Ki=1.5 nM) (By similarity). Interacts with vasopressin V1aR/AVPR1A (Ki=37 nM), V1bR/AVPR1B (Ki=222 nM), and V2R/AVPR2 receptors (Ki=823 nM) (By similarity).</text>
</comment>
<comment type="similarity">
    <text evidence="4">Belongs to the vasopressin/oxytocin family.</text>
</comment>
<feature type="peptide" id="PRO_0000020499" description="Oxytocin">
    <location>
        <begin position="1" status="less than"/>
        <end position="3"/>
    </location>
</feature>
<feature type="chain" id="PRO_0000020500" description="Neurophysin 1">
    <location>
        <begin position="7"/>
        <end position="85" status="greater than"/>
    </location>
</feature>
<feature type="modified residue" description="Glycine amide" evidence="1">
    <location>
        <position position="3"/>
    </location>
</feature>
<feature type="disulfide bond" evidence="2">
    <location>
        <begin position="16"/>
        <end position="60"/>
    </location>
</feature>
<feature type="disulfide bond" evidence="2">
    <location>
        <begin position="19"/>
        <end position="33"/>
    </location>
</feature>
<feature type="disulfide bond" evidence="2">
    <location>
        <begin position="27"/>
        <end position="50"/>
    </location>
</feature>
<feature type="disulfide bond" evidence="2">
    <location>
        <begin position="34"/>
        <end position="40"/>
    </location>
</feature>
<feature type="disulfide bond" evidence="2">
    <location>
        <begin position="67"/>
        <end position="79"/>
    </location>
</feature>
<feature type="disulfide bond" evidence="2">
    <location>
        <begin position="80"/>
        <end position="85"/>
    </location>
</feature>
<feature type="non-terminal residue">
    <location>
        <position position="1"/>
    </location>
</feature>
<feature type="non-terminal residue">
    <location>
        <position position="85"/>
    </location>
</feature>
<name>NEU1_PAPHA</name>
<sequence length="85" mass="8643">PLGGKRAAPDLDVRKCLPCGPGGKGRCFGPNICCAEELGCFVGTAEALRCQEENYLPSPCQSGQKACGSGGRCAVFGLCCSPDGC</sequence>
<proteinExistence type="evidence at transcript level"/>
<dbReference type="EMBL" id="M62612">
    <property type="protein sequence ID" value="AAA16517.1"/>
    <property type="molecule type" value="mRNA"/>
</dbReference>
<dbReference type="SMR" id="P32005"/>
<dbReference type="GO" id="GO:0005615">
    <property type="term" value="C:extracellular space"/>
    <property type="evidence" value="ECO:0007669"/>
    <property type="project" value="TreeGrafter"/>
</dbReference>
<dbReference type="GO" id="GO:0030141">
    <property type="term" value="C:secretory granule"/>
    <property type="evidence" value="ECO:0007669"/>
    <property type="project" value="TreeGrafter"/>
</dbReference>
<dbReference type="GO" id="GO:0005185">
    <property type="term" value="F:neurohypophyseal hormone activity"/>
    <property type="evidence" value="ECO:0007669"/>
    <property type="project" value="InterPro"/>
</dbReference>
<dbReference type="GO" id="GO:0031855">
    <property type="term" value="F:oxytocin receptor binding"/>
    <property type="evidence" value="ECO:0007669"/>
    <property type="project" value="TreeGrafter"/>
</dbReference>
<dbReference type="GO" id="GO:0031894">
    <property type="term" value="F:V1A vasopressin receptor binding"/>
    <property type="evidence" value="ECO:0007669"/>
    <property type="project" value="TreeGrafter"/>
</dbReference>
<dbReference type="FunFam" id="2.60.9.10:FF:000001">
    <property type="entry name" value="oxytocin-neurophysin 1"/>
    <property type="match status" value="1"/>
</dbReference>
<dbReference type="Gene3D" id="2.60.9.10">
    <property type="entry name" value="Neurohypophysial hormone domain"/>
    <property type="match status" value="1"/>
</dbReference>
<dbReference type="InterPro" id="IPR000981">
    <property type="entry name" value="Neurhyp_horm"/>
</dbReference>
<dbReference type="InterPro" id="IPR036387">
    <property type="entry name" value="Neurhyp_horm_dom_sf"/>
</dbReference>
<dbReference type="PANTHER" id="PTHR11681">
    <property type="entry name" value="NEUROPHYSIN"/>
    <property type="match status" value="1"/>
</dbReference>
<dbReference type="PANTHER" id="PTHR11681:SF2">
    <property type="entry name" value="OXYTOCIN-NEUROPHYSIN 1"/>
    <property type="match status" value="1"/>
</dbReference>
<dbReference type="Pfam" id="PF00184">
    <property type="entry name" value="Hormone_5"/>
    <property type="match status" value="1"/>
</dbReference>
<dbReference type="PRINTS" id="PR00831">
    <property type="entry name" value="NEUROPHYSIN"/>
</dbReference>
<dbReference type="SMART" id="SM00003">
    <property type="entry name" value="NH"/>
    <property type="match status" value="1"/>
</dbReference>
<dbReference type="SUPFAM" id="SSF49606">
    <property type="entry name" value="Neurophysin II"/>
    <property type="match status" value="1"/>
</dbReference>